<evidence type="ECO:0000255" key="1">
    <source>
        <dbReference type="HAMAP-Rule" id="MF_00379"/>
    </source>
</evidence>
<protein>
    <recommendedName>
        <fullName evidence="1">tRNA modification GTPase MnmE</fullName>
        <ecNumber evidence="1">3.6.-.-</ecNumber>
    </recommendedName>
</protein>
<comment type="function">
    <text evidence="1">Exhibits a very high intrinsic GTPase hydrolysis rate. Involved in the addition of a carboxymethylaminomethyl (cmnm) group at the wobble position (U34) of certain tRNAs, forming tRNA-cmnm(5)s(2)U34.</text>
</comment>
<comment type="cofactor">
    <cofactor evidence="1">
        <name>K(+)</name>
        <dbReference type="ChEBI" id="CHEBI:29103"/>
    </cofactor>
    <text evidence="1">Binds 1 potassium ion per subunit.</text>
</comment>
<comment type="subunit">
    <text evidence="1">Homodimer. Heterotetramer of two MnmE and two MnmG subunits.</text>
</comment>
<comment type="subcellular location">
    <subcellularLocation>
        <location evidence="1">Cytoplasm</location>
    </subcellularLocation>
</comment>
<comment type="similarity">
    <text evidence="1">Belongs to the TRAFAC class TrmE-Era-EngA-EngB-Septin-like GTPase superfamily. TrmE GTPase family.</text>
</comment>
<feature type="chain" id="PRO_0000345871" description="tRNA modification GTPase MnmE">
    <location>
        <begin position="1"/>
        <end position="457"/>
    </location>
</feature>
<feature type="domain" description="TrmE-type G">
    <location>
        <begin position="220"/>
        <end position="379"/>
    </location>
</feature>
<feature type="binding site" evidence="1">
    <location>
        <position position="24"/>
    </location>
    <ligand>
        <name>(6S)-5-formyl-5,6,7,8-tetrahydrofolate</name>
        <dbReference type="ChEBI" id="CHEBI:57457"/>
    </ligand>
</feature>
<feature type="binding site" evidence="1">
    <location>
        <position position="81"/>
    </location>
    <ligand>
        <name>(6S)-5-formyl-5,6,7,8-tetrahydrofolate</name>
        <dbReference type="ChEBI" id="CHEBI:57457"/>
    </ligand>
</feature>
<feature type="binding site" evidence="1">
    <location>
        <position position="124"/>
    </location>
    <ligand>
        <name>(6S)-5-formyl-5,6,7,8-tetrahydrofolate</name>
        <dbReference type="ChEBI" id="CHEBI:57457"/>
    </ligand>
</feature>
<feature type="binding site" evidence="1">
    <location>
        <begin position="230"/>
        <end position="235"/>
    </location>
    <ligand>
        <name>GTP</name>
        <dbReference type="ChEBI" id="CHEBI:37565"/>
    </ligand>
</feature>
<feature type="binding site" evidence="1">
    <location>
        <position position="230"/>
    </location>
    <ligand>
        <name>K(+)</name>
        <dbReference type="ChEBI" id="CHEBI:29103"/>
    </ligand>
</feature>
<feature type="binding site" evidence="1">
    <location>
        <position position="234"/>
    </location>
    <ligand>
        <name>Mg(2+)</name>
        <dbReference type="ChEBI" id="CHEBI:18420"/>
    </ligand>
</feature>
<feature type="binding site" evidence="1">
    <location>
        <begin position="249"/>
        <end position="255"/>
    </location>
    <ligand>
        <name>GTP</name>
        <dbReference type="ChEBI" id="CHEBI:37565"/>
    </ligand>
</feature>
<feature type="binding site" evidence="1">
    <location>
        <position position="249"/>
    </location>
    <ligand>
        <name>K(+)</name>
        <dbReference type="ChEBI" id="CHEBI:29103"/>
    </ligand>
</feature>
<feature type="binding site" evidence="1">
    <location>
        <position position="251"/>
    </location>
    <ligand>
        <name>K(+)</name>
        <dbReference type="ChEBI" id="CHEBI:29103"/>
    </ligand>
</feature>
<feature type="binding site" evidence="1">
    <location>
        <position position="254"/>
    </location>
    <ligand>
        <name>K(+)</name>
        <dbReference type="ChEBI" id="CHEBI:29103"/>
    </ligand>
</feature>
<feature type="binding site" evidence="1">
    <location>
        <position position="255"/>
    </location>
    <ligand>
        <name>Mg(2+)</name>
        <dbReference type="ChEBI" id="CHEBI:18420"/>
    </ligand>
</feature>
<feature type="binding site" evidence="1">
    <location>
        <begin position="274"/>
        <end position="277"/>
    </location>
    <ligand>
        <name>GTP</name>
        <dbReference type="ChEBI" id="CHEBI:37565"/>
    </ligand>
</feature>
<feature type="binding site" evidence="1">
    <location>
        <position position="457"/>
    </location>
    <ligand>
        <name>(6S)-5-formyl-5,6,7,8-tetrahydrofolate</name>
        <dbReference type="ChEBI" id="CHEBI:57457"/>
    </ligand>
</feature>
<organism>
    <name type="scientific">Polynucleobacter asymbioticus (strain DSM 18221 / CIP 109841 / QLW-P1DMWA-1)</name>
    <name type="common">Polynucleobacter necessarius subsp. asymbioticus</name>
    <dbReference type="NCBI Taxonomy" id="312153"/>
    <lineage>
        <taxon>Bacteria</taxon>
        <taxon>Pseudomonadati</taxon>
        <taxon>Pseudomonadota</taxon>
        <taxon>Betaproteobacteria</taxon>
        <taxon>Burkholderiales</taxon>
        <taxon>Burkholderiaceae</taxon>
        <taxon>Polynucleobacter</taxon>
    </lineage>
</organism>
<dbReference type="EC" id="3.6.-.-" evidence="1"/>
<dbReference type="EMBL" id="CP000655">
    <property type="protein sequence ID" value="ABP35295.1"/>
    <property type="molecule type" value="Genomic_DNA"/>
</dbReference>
<dbReference type="SMR" id="A4T0N1"/>
<dbReference type="KEGG" id="pnu:Pnuc_2084"/>
<dbReference type="eggNOG" id="COG0486">
    <property type="taxonomic scope" value="Bacteria"/>
</dbReference>
<dbReference type="HOGENOM" id="CLU_019624_4_1_4"/>
<dbReference type="Proteomes" id="UP000000231">
    <property type="component" value="Chromosome"/>
</dbReference>
<dbReference type="GO" id="GO:0005829">
    <property type="term" value="C:cytosol"/>
    <property type="evidence" value="ECO:0007669"/>
    <property type="project" value="TreeGrafter"/>
</dbReference>
<dbReference type="GO" id="GO:0005525">
    <property type="term" value="F:GTP binding"/>
    <property type="evidence" value="ECO:0007669"/>
    <property type="project" value="UniProtKB-UniRule"/>
</dbReference>
<dbReference type="GO" id="GO:0003924">
    <property type="term" value="F:GTPase activity"/>
    <property type="evidence" value="ECO:0007669"/>
    <property type="project" value="UniProtKB-UniRule"/>
</dbReference>
<dbReference type="GO" id="GO:0046872">
    <property type="term" value="F:metal ion binding"/>
    <property type="evidence" value="ECO:0007669"/>
    <property type="project" value="UniProtKB-KW"/>
</dbReference>
<dbReference type="GO" id="GO:0030488">
    <property type="term" value="P:tRNA methylation"/>
    <property type="evidence" value="ECO:0007669"/>
    <property type="project" value="TreeGrafter"/>
</dbReference>
<dbReference type="GO" id="GO:0002098">
    <property type="term" value="P:tRNA wobble uridine modification"/>
    <property type="evidence" value="ECO:0007669"/>
    <property type="project" value="TreeGrafter"/>
</dbReference>
<dbReference type="CDD" id="cd04164">
    <property type="entry name" value="trmE"/>
    <property type="match status" value="1"/>
</dbReference>
<dbReference type="CDD" id="cd14858">
    <property type="entry name" value="TrmE_N"/>
    <property type="match status" value="1"/>
</dbReference>
<dbReference type="Gene3D" id="3.40.50.300">
    <property type="entry name" value="P-loop containing nucleotide triphosphate hydrolases"/>
    <property type="match status" value="1"/>
</dbReference>
<dbReference type="Gene3D" id="3.30.1360.120">
    <property type="entry name" value="Probable tRNA modification gtpase trme, domain 1"/>
    <property type="match status" value="1"/>
</dbReference>
<dbReference type="Gene3D" id="1.20.120.430">
    <property type="entry name" value="tRNA modification GTPase MnmE domain 2"/>
    <property type="match status" value="1"/>
</dbReference>
<dbReference type="HAMAP" id="MF_00379">
    <property type="entry name" value="GTPase_MnmE"/>
    <property type="match status" value="1"/>
</dbReference>
<dbReference type="InterPro" id="IPR031168">
    <property type="entry name" value="G_TrmE"/>
</dbReference>
<dbReference type="InterPro" id="IPR006073">
    <property type="entry name" value="GTP-bd"/>
</dbReference>
<dbReference type="InterPro" id="IPR018948">
    <property type="entry name" value="GTP-bd_TrmE_N"/>
</dbReference>
<dbReference type="InterPro" id="IPR004520">
    <property type="entry name" value="GTPase_MnmE"/>
</dbReference>
<dbReference type="InterPro" id="IPR027368">
    <property type="entry name" value="MnmE_dom2"/>
</dbReference>
<dbReference type="InterPro" id="IPR025867">
    <property type="entry name" value="MnmE_helical"/>
</dbReference>
<dbReference type="InterPro" id="IPR027417">
    <property type="entry name" value="P-loop_NTPase"/>
</dbReference>
<dbReference type="InterPro" id="IPR005225">
    <property type="entry name" value="Small_GTP-bd"/>
</dbReference>
<dbReference type="InterPro" id="IPR027266">
    <property type="entry name" value="TrmE/GcvT_dom1"/>
</dbReference>
<dbReference type="NCBIfam" id="TIGR00450">
    <property type="entry name" value="mnmE_trmE_thdF"/>
    <property type="match status" value="1"/>
</dbReference>
<dbReference type="NCBIfam" id="NF003661">
    <property type="entry name" value="PRK05291.1-3"/>
    <property type="match status" value="1"/>
</dbReference>
<dbReference type="NCBIfam" id="TIGR00231">
    <property type="entry name" value="small_GTP"/>
    <property type="match status" value="1"/>
</dbReference>
<dbReference type="PANTHER" id="PTHR42714">
    <property type="entry name" value="TRNA MODIFICATION GTPASE GTPBP3"/>
    <property type="match status" value="1"/>
</dbReference>
<dbReference type="PANTHER" id="PTHR42714:SF2">
    <property type="entry name" value="TRNA MODIFICATION GTPASE GTPBP3, MITOCHONDRIAL"/>
    <property type="match status" value="1"/>
</dbReference>
<dbReference type="Pfam" id="PF01926">
    <property type="entry name" value="MMR_HSR1"/>
    <property type="match status" value="1"/>
</dbReference>
<dbReference type="Pfam" id="PF12631">
    <property type="entry name" value="MnmE_helical"/>
    <property type="match status" value="1"/>
</dbReference>
<dbReference type="Pfam" id="PF10396">
    <property type="entry name" value="TrmE_N"/>
    <property type="match status" value="1"/>
</dbReference>
<dbReference type="SUPFAM" id="SSF52540">
    <property type="entry name" value="P-loop containing nucleoside triphosphate hydrolases"/>
    <property type="match status" value="1"/>
</dbReference>
<dbReference type="SUPFAM" id="SSF116878">
    <property type="entry name" value="TrmE connector domain"/>
    <property type="match status" value="1"/>
</dbReference>
<dbReference type="PROSITE" id="PS51709">
    <property type="entry name" value="G_TRME"/>
    <property type="match status" value="1"/>
</dbReference>
<proteinExistence type="inferred from homology"/>
<name>MNME_POLAQ</name>
<sequence>MMTRKVPIIAVATAPGKAGVGVVRISGQGLGELVETLFHRSLAPRQATLLTFCDADNQPIDQLLAIYFVGPASFTGEDVLELQCHGGPQLLELVMKRCLELGKALGLVIAEPGEFTLRAYLNNKVDLAQAEAIADLIDAQSEAAVRGAARSLQGSFSEDINGLIEEITQLRILVESTLDFPEEEIEFLENAQARERLAAVKKKLEALQAGAKQGKILRDGIQLVLAGAPNVGKSSLLNRLAGEEVAIVTPIAGTTRDRVKESIQIEGVPMHIIDTAGLRKTVDEVEAKGIERTWEAIRLADLVIFLGAPNAEPGHESLREEILGALPAKCPILDVINKSDLIEGGLAVSSSNEASPLLISAKTGAGIDALKQKILHVVGWNGAQEGAIVSRRRHLDCLERAAEHIAKSEQFAANGNNSLELFAEELFLAQNHLGQITGKLLPDDLLGKIFSQFCIGK</sequence>
<accession>A4T0N1</accession>
<gene>
    <name evidence="1" type="primary">mnmE</name>
    <name evidence="1" type="synonym">trmE</name>
    <name type="ordered locus">Pnuc_2084</name>
</gene>
<reference key="1">
    <citation type="journal article" date="2012" name="Stand. Genomic Sci.">
        <title>Complete genome sequence of Polynucleobacter necessarius subsp. asymbioticus type strain (QLW-P1DMWA-1(T)).</title>
        <authorList>
            <person name="Meincke L."/>
            <person name="Copeland A."/>
            <person name="Lapidus A."/>
            <person name="Lucas S."/>
            <person name="Berry K.W."/>
            <person name="Del Rio T.G."/>
            <person name="Hammon N."/>
            <person name="Dalin E."/>
            <person name="Tice H."/>
            <person name="Pitluck S."/>
            <person name="Richardson P."/>
            <person name="Bruce D."/>
            <person name="Goodwin L."/>
            <person name="Han C."/>
            <person name="Tapia R."/>
            <person name="Detter J.C."/>
            <person name="Schmutz J."/>
            <person name="Brettin T."/>
            <person name="Larimer F."/>
            <person name="Land M."/>
            <person name="Hauser L."/>
            <person name="Kyrpides N.C."/>
            <person name="Ivanova N."/>
            <person name="Goker M."/>
            <person name="Woyke T."/>
            <person name="Wu Q.L."/>
            <person name="Pockl M."/>
            <person name="Hahn M.W."/>
            <person name="Klenk H.P."/>
        </authorList>
    </citation>
    <scope>NUCLEOTIDE SEQUENCE [LARGE SCALE GENOMIC DNA]</scope>
    <source>
        <strain>DSM 18221 / CIP 109841 / QLW-P1DMWA-1</strain>
    </source>
</reference>
<keyword id="KW-0963">Cytoplasm</keyword>
<keyword id="KW-0342">GTP-binding</keyword>
<keyword id="KW-0378">Hydrolase</keyword>
<keyword id="KW-0460">Magnesium</keyword>
<keyword id="KW-0479">Metal-binding</keyword>
<keyword id="KW-0547">Nucleotide-binding</keyword>
<keyword id="KW-0630">Potassium</keyword>
<keyword id="KW-1185">Reference proteome</keyword>
<keyword id="KW-0819">tRNA processing</keyword>